<proteinExistence type="evidence at transcript level"/>
<comment type="function">
    <text evidence="1">Catalyzes the reversible transfer of the terminal phosphate group between ATP and AMP. Plays an important role in cellular energy homeostasis and in adenine nucleotide metabolism.</text>
</comment>
<comment type="catalytic activity">
    <reaction evidence="1">
        <text>AMP + ATP = 2 ADP</text>
        <dbReference type="Rhea" id="RHEA:12973"/>
        <dbReference type="ChEBI" id="CHEBI:30616"/>
        <dbReference type="ChEBI" id="CHEBI:456215"/>
        <dbReference type="ChEBI" id="CHEBI:456216"/>
        <dbReference type="EC" id="2.7.4.3"/>
    </reaction>
</comment>
<comment type="subunit">
    <text evidence="1">Monomer.</text>
</comment>
<comment type="subcellular location">
    <subcellularLocation>
        <location evidence="1">Cytoplasm</location>
    </subcellularLocation>
</comment>
<comment type="similarity">
    <text evidence="2">Belongs to the adenylate kinase family.</text>
</comment>
<sequence length="288" mass="31433">MAAMIRLFRSSSSSSSNSISLISRSLSTAAASETVKSQSYPHNPHSTSVDPKAKTVQWVFLGCPGVGKGTYASRLSTLLGVPHIATGDLVRDELKSSGPLSKQLAEIVNQGKLVSDEIILNLLSKRLESGEAKGEAGFILDGFPRTVRQAEILTEVTDIDLVVNLKLPERVLVEKCLGRRICSECGKNFNVASIDVAGENGAPRISMARLNPPFTVCFKLITRADDTEAIVKERLSIYWDKSQPVEDFYRSQGKLLEFDLPGGIPESWPKLLEVLNLDEQEYKLSPAA</sequence>
<keyword id="KW-0067">ATP-binding</keyword>
<keyword id="KW-0963">Cytoplasm</keyword>
<keyword id="KW-0418">Kinase</keyword>
<keyword id="KW-0547">Nucleotide-binding</keyword>
<keyword id="KW-1185">Reference proteome</keyword>
<keyword id="KW-0808">Transferase</keyword>
<protein>
    <recommendedName>
        <fullName>Adenylate kinase</fullName>
        <shortName>AK</shortName>
        <ecNumber>2.7.4.3</ecNumber>
    </recommendedName>
    <alternativeName>
        <fullName>ATP-AMP transphosphorylase</fullName>
    </alternativeName>
    <alternativeName>
        <fullName>ATP:AMP phosphotransferase</fullName>
    </alternativeName>
    <alternativeName>
        <fullName>Adenylate monophosphate kinase</fullName>
    </alternativeName>
</protein>
<reference key="1">
    <citation type="submission" date="2001-08" db="EMBL/GenBank/DDBJ databases">
        <title>StpADK (adenylate kinase, plastidial).</title>
        <authorList>
            <person name="Regierer B."/>
            <person name="Fernie A.R."/>
            <person name="Springer F."/>
            <person name="Perez A."/>
            <person name="Willmitzer L."/>
            <person name="Geigenberger P."/>
            <person name="Kossmann J."/>
        </authorList>
    </citation>
    <scope>NUCLEOTIDE SEQUENCE [MRNA]</scope>
</reference>
<feature type="chain" id="PRO_0000016556" description="Adenylate kinase">
    <location>
        <begin position="1"/>
        <end position="288"/>
    </location>
</feature>
<feature type="region of interest" description="NMP" evidence="1">
    <location>
        <begin position="85"/>
        <end position="114"/>
    </location>
</feature>
<feature type="region of interest" description="LID" evidence="1">
    <location>
        <begin position="178"/>
        <end position="226"/>
    </location>
</feature>
<feature type="binding site" evidence="1">
    <location>
        <begin position="65"/>
        <end position="70"/>
    </location>
    <ligand>
        <name>ATP</name>
        <dbReference type="ChEBI" id="CHEBI:30616"/>
    </ligand>
</feature>
<feature type="binding site" evidence="1">
    <location>
        <position position="86"/>
    </location>
    <ligand>
        <name>AMP</name>
        <dbReference type="ChEBI" id="CHEBI:456215"/>
    </ligand>
</feature>
<feature type="binding site" evidence="1">
    <location>
        <position position="91"/>
    </location>
    <ligand>
        <name>AMP</name>
        <dbReference type="ChEBI" id="CHEBI:456215"/>
    </ligand>
</feature>
<feature type="binding site" evidence="1">
    <location>
        <begin position="112"/>
        <end position="114"/>
    </location>
    <ligand>
        <name>AMP</name>
        <dbReference type="ChEBI" id="CHEBI:456215"/>
    </ligand>
</feature>
<feature type="binding site" evidence="1">
    <location>
        <begin position="142"/>
        <end position="145"/>
    </location>
    <ligand>
        <name>AMP</name>
        <dbReference type="ChEBI" id="CHEBI:456215"/>
    </ligand>
</feature>
<feature type="binding site" evidence="1">
    <location>
        <position position="149"/>
    </location>
    <ligand>
        <name>AMP</name>
        <dbReference type="ChEBI" id="CHEBI:456215"/>
    </ligand>
</feature>
<feature type="binding site" evidence="1">
    <location>
        <position position="179"/>
    </location>
    <ligand>
        <name>ATP</name>
        <dbReference type="ChEBI" id="CHEBI:30616"/>
    </ligand>
</feature>
<feature type="binding site" evidence="1">
    <location>
        <position position="223"/>
    </location>
    <ligand>
        <name>AMP</name>
        <dbReference type="ChEBI" id="CHEBI:456215"/>
    </ligand>
</feature>
<feature type="binding site" evidence="1">
    <location>
        <position position="234"/>
    </location>
    <ligand>
        <name>AMP</name>
        <dbReference type="ChEBI" id="CHEBI:456215"/>
    </ligand>
</feature>
<feature type="binding site" evidence="1">
    <location>
        <position position="262"/>
    </location>
    <ligand>
        <name>ATP</name>
        <dbReference type="ChEBI" id="CHEBI:30616"/>
    </ligand>
</feature>
<name>KAD1_SOLTU</name>
<gene>
    <name type="primary">ADK</name>
</gene>
<dbReference type="EC" id="2.7.4.3"/>
<dbReference type="EMBL" id="AF411937">
    <property type="protein sequence ID" value="AAN76661.1"/>
    <property type="molecule type" value="mRNA"/>
</dbReference>
<dbReference type="SMR" id="Q8HSW1"/>
<dbReference type="FunCoup" id="Q8HSW1">
    <property type="interactions" value="540"/>
</dbReference>
<dbReference type="STRING" id="4113.Q8HSW1"/>
<dbReference type="PaxDb" id="4113-PGSC0003DMT400071737"/>
<dbReference type="eggNOG" id="KOG3078">
    <property type="taxonomic scope" value="Eukaryota"/>
</dbReference>
<dbReference type="InParanoid" id="Q8HSW1"/>
<dbReference type="Proteomes" id="UP000011115">
    <property type="component" value="Unassembled WGS sequence"/>
</dbReference>
<dbReference type="ExpressionAtlas" id="Q8HSW1">
    <property type="expression patterns" value="baseline and differential"/>
</dbReference>
<dbReference type="GO" id="GO:0005737">
    <property type="term" value="C:cytoplasm"/>
    <property type="evidence" value="ECO:0000318"/>
    <property type="project" value="GO_Central"/>
</dbReference>
<dbReference type="GO" id="GO:0005739">
    <property type="term" value="C:mitochondrion"/>
    <property type="evidence" value="ECO:0000318"/>
    <property type="project" value="GO_Central"/>
</dbReference>
<dbReference type="GO" id="GO:0004017">
    <property type="term" value="F:adenylate kinase activity"/>
    <property type="evidence" value="ECO:0000318"/>
    <property type="project" value="GO_Central"/>
</dbReference>
<dbReference type="GO" id="GO:0005524">
    <property type="term" value="F:ATP binding"/>
    <property type="evidence" value="ECO:0007669"/>
    <property type="project" value="UniProtKB-KW"/>
</dbReference>
<dbReference type="CDD" id="cd01428">
    <property type="entry name" value="ADK"/>
    <property type="match status" value="1"/>
</dbReference>
<dbReference type="Gene3D" id="3.40.50.300">
    <property type="entry name" value="P-loop containing nucleotide triphosphate hydrolases"/>
    <property type="match status" value="1"/>
</dbReference>
<dbReference type="HAMAP" id="MF_00235">
    <property type="entry name" value="Adenylate_kinase_Adk"/>
    <property type="match status" value="1"/>
</dbReference>
<dbReference type="InterPro" id="IPR006259">
    <property type="entry name" value="Adenyl_kin_sub"/>
</dbReference>
<dbReference type="InterPro" id="IPR000850">
    <property type="entry name" value="Adenylat/UMP-CMP_kin"/>
</dbReference>
<dbReference type="InterPro" id="IPR033690">
    <property type="entry name" value="Adenylat_kinase_CS"/>
</dbReference>
<dbReference type="InterPro" id="IPR027417">
    <property type="entry name" value="P-loop_NTPase"/>
</dbReference>
<dbReference type="NCBIfam" id="TIGR01351">
    <property type="entry name" value="adk"/>
    <property type="match status" value="1"/>
</dbReference>
<dbReference type="PANTHER" id="PTHR23359">
    <property type="entry name" value="NUCLEOTIDE KINASE"/>
    <property type="match status" value="1"/>
</dbReference>
<dbReference type="Pfam" id="PF00406">
    <property type="entry name" value="ADK"/>
    <property type="match status" value="1"/>
</dbReference>
<dbReference type="PRINTS" id="PR00094">
    <property type="entry name" value="ADENYLTKNASE"/>
</dbReference>
<dbReference type="SUPFAM" id="SSF52540">
    <property type="entry name" value="P-loop containing nucleoside triphosphate hydrolases"/>
    <property type="match status" value="1"/>
</dbReference>
<dbReference type="PROSITE" id="PS00113">
    <property type="entry name" value="ADENYLATE_KINASE"/>
    <property type="match status" value="1"/>
</dbReference>
<organism>
    <name type="scientific">Solanum tuberosum</name>
    <name type="common">Potato</name>
    <dbReference type="NCBI Taxonomy" id="4113"/>
    <lineage>
        <taxon>Eukaryota</taxon>
        <taxon>Viridiplantae</taxon>
        <taxon>Streptophyta</taxon>
        <taxon>Embryophyta</taxon>
        <taxon>Tracheophyta</taxon>
        <taxon>Spermatophyta</taxon>
        <taxon>Magnoliopsida</taxon>
        <taxon>eudicotyledons</taxon>
        <taxon>Gunneridae</taxon>
        <taxon>Pentapetalae</taxon>
        <taxon>asterids</taxon>
        <taxon>lamiids</taxon>
        <taxon>Solanales</taxon>
        <taxon>Solanaceae</taxon>
        <taxon>Solanoideae</taxon>
        <taxon>Solaneae</taxon>
        <taxon>Solanum</taxon>
    </lineage>
</organism>
<evidence type="ECO:0000250" key="1">
    <source>
        <dbReference type="UniProtKB" id="P69441"/>
    </source>
</evidence>
<evidence type="ECO:0000305" key="2"/>
<accession>Q8HSW1</accession>